<reference key="1">
    <citation type="journal article" date="1999" name="Nature">
        <title>Sequence and analysis of chromosome 2 of the plant Arabidopsis thaliana.</title>
        <authorList>
            <person name="Lin X."/>
            <person name="Kaul S."/>
            <person name="Rounsley S.D."/>
            <person name="Shea T.P."/>
            <person name="Benito M.-I."/>
            <person name="Town C.D."/>
            <person name="Fujii C.Y."/>
            <person name="Mason T.M."/>
            <person name="Bowman C.L."/>
            <person name="Barnstead M.E."/>
            <person name="Feldblyum T.V."/>
            <person name="Buell C.R."/>
            <person name="Ketchum K.A."/>
            <person name="Lee J.J."/>
            <person name="Ronning C.M."/>
            <person name="Koo H.L."/>
            <person name="Moffat K.S."/>
            <person name="Cronin L.A."/>
            <person name="Shen M."/>
            <person name="Pai G."/>
            <person name="Van Aken S."/>
            <person name="Umayam L."/>
            <person name="Tallon L.J."/>
            <person name="Gill J.E."/>
            <person name="Adams M.D."/>
            <person name="Carrera A.J."/>
            <person name="Creasy T.H."/>
            <person name="Goodman H.M."/>
            <person name="Somerville C.R."/>
            <person name="Copenhaver G.P."/>
            <person name="Preuss D."/>
            <person name="Nierman W.C."/>
            <person name="White O."/>
            <person name="Eisen J.A."/>
            <person name="Salzberg S.L."/>
            <person name="Fraser C.M."/>
            <person name="Venter J.C."/>
        </authorList>
    </citation>
    <scope>NUCLEOTIDE SEQUENCE [LARGE SCALE GENOMIC DNA]</scope>
    <source>
        <strain>cv. Columbia</strain>
    </source>
</reference>
<reference key="2">
    <citation type="journal article" date="2017" name="Plant J.">
        <title>Araport11: a complete reannotation of the Arabidopsis thaliana reference genome.</title>
        <authorList>
            <person name="Cheng C.Y."/>
            <person name="Krishnakumar V."/>
            <person name="Chan A.P."/>
            <person name="Thibaud-Nissen F."/>
            <person name="Schobel S."/>
            <person name="Town C.D."/>
        </authorList>
    </citation>
    <scope>GENOME REANNOTATION</scope>
    <source>
        <strain>cv. Columbia</strain>
    </source>
</reference>
<evidence type="ECO:0000255" key="1">
    <source>
        <dbReference type="PROSITE-ProRule" id="PRU00080"/>
    </source>
</evidence>
<evidence type="ECO:0000305" key="2"/>
<sequence length="154" mass="17671">MRDLTTAMSDLPRDLEEEVLSRVQLASLRAVRTTCKKWNRRLSKYRFTKKYIRKSRSATADKEFLAIMMLDSSLYLMNVVIDKIDNENNVESSIERKGKLISVNDADGVDIISVVHYNALLLCLTKEKTPKACGLEPLSWAIKVDRNCLSLRFI</sequence>
<dbReference type="EMBL" id="AC006136">
    <property type="protein sequence ID" value="AAD15373.1"/>
    <property type="status" value="ALT_SEQ"/>
    <property type="molecule type" value="Genomic_DNA"/>
</dbReference>
<dbReference type="EMBL" id="CP002685">
    <property type="protein sequence ID" value="AEC06168.1"/>
    <property type="molecule type" value="Genomic_DNA"/>
</dbReference>
<dbReference type="PIR" id="F84496">
    <property type="entry name" value="F84496"/>
</dbReference>
<dbReference type="RefSeq" id="NP_178884.2">
    <property type="nucleotide sequence ID" value="NM_126843.2"/>
</dbReference>
<dbReference type="FunCoup" id="Q9ZQM4">
    <property type="interactions" value="33"/>
</dbReference>
<dbReference type="STRING" id="3702.Q9ZQM4"/>
<dbReference type="PaxDb" id="3702-AT2G11200.1"/>
<dbReference type="EnsemblPlants" id="AT2G11200.1">
    <property type="protein sequence ID" value="AT2G11200.1"/>
    <property type="gene ID" value="AT2G11200"/>
</dbReference>
<dbReference type="GeneID" id="815590"/>
<dbReference type="Gramene" id="AT2G11200.1">
    <property type="protein sequence ID" value="AT2G11200.1"/>
    <property type="gene ID" value="AT2G11200"/>
</dbReference>
<dbReference type="KEGG" id="ath:AT2G11200"/>
<dbReference type="Araport" id="AT2G11200"/>
<dbReference type="TAIR" id="AT2G11200"/>
<dbReference type="HOGENOM" id="CLU_034692_4_3_1"/>
<dbReference type="InParanoid" id="Q9ZQM4"/>
<dbReference type="OMA" id="MIKRHIG"/>
<dbReference type="PRO" id="PR:Q9ZQM4"/>
<dbReference type="Proteomes" id="UP000006548">
    <property type="component" value="Chromosome 2"/>
</dbReference>
<dbReference type="ExpressionAtlas" id="Q9ZQM4">
    <property type="expression patterns" value="differential"/>
</dbReference>
<dbReference type="InterPro" id="IPR036047">
    <property type="entry name" value="F-box-like_dom_sf"/>
</dbReference>
<dbReference type="InterPro" id="IPR001810">
    <property type="entry name" value="F-box_dom"/>
</dbReference>
<dbReference type="Pfam" id="PF00646">
    <property type="entry name" value="F-box"/>
    <property type="match status" value="1"/>
</dbReference>
<dbReference type="SUPFAM" id="SSF81383">
    <property type="entry name" value="F-box domain"/>
    <property type="match status" value="1"/>
</dbReference>
<dbReference type="PROSITE" id="PS50181">
    <property type="entry name" value="FBOX"/>
    <property type="match status" value="1"/>
</dbReference>
<proteinExistence type="predicted"/>
<accession>Q9ZQM4</accession>
<accession>F4IRD7</accession>
<keyword id="KW-1185">Reference proteome</keyword>
<name>FB101_ARATH</name>
<gene>
    <name type="ordered locus">At2g11200</name>
    <name type="ORF">T13H18.10</name>
</gene>
<organism>
    <name type="scientific">Arabidopsis thaliana</name>
    <name type="common">Mouse-ear cress</name>
    <dbReference type="NCBI Taxonomy" id="3702"/>
    <lineage>
        <taxon>Eukaryota</taxon>
        <taxon>Viridiplantae</taxon>
        <taxon>Streptophyta</taxon>
        <taxon>Embryophyta</taxon>
        <taxon>Tracheophyta</taxon>
        <taxon>Spermatophyta</taxon>
        <taxon>Magnoliopsida</taxon>
        <taxon>eudicotyledons</taxon>
        <taxon>Gunneridae</taxon>
        <taxon>Pentapetalae</taxon>
        <taxon>rosids</taxon>
        <taxon>malvids</taxon>
        <taxon>Brassicales</taxon>
        <taxon>Brassicaceae</taxon>
        <taxon>Camelineae</taxon>
        <taxon>Arabidopsis</taxon>
    </lineage>
</organism>
<protein>
    <recommendedName>
        <fullName>Putative F-box protein At2g11200</fullName>
    </recommendedName>
</protein>
<comment type="sequence caution" evidence="2">
    <conflict type="erroneous gene model prediction">
        <sequence resource="EMBL-CDS" id="AAD15373"/>
    </conflict>
</comment>
<feature type="chain" id="PRO_0000283374" description="Putative F-box protein At2g11200">
    <location>
        <begin position="1"/>
        <end position="154"/>
    </location>
</feature>
<feature type="domain" description="F-box" evidence="1">
    <location>
        <begin position="5"/>
        <end position="51"/>
    </location>
</feature>